<proteinExistence type="evidence at transcript level"/>
<protein>
    <recommendedName>
        <fullName>Zinc finger C2HC domain-containing protein 1A</fullName>
    </recommendedName>
</protein>
<sequence>MEGLEENGGVVQVGELLPCKICGRTFFPVALKKHGPICKKTATKKRKTFDSSRQRAEGTDIPTVKPLKPRPEPPKKPSNWRRKHEEFIATIRAAKGLDQALKEGGKLPPPPPPSYDPDYIQCPYCQRRFNENAADRHINFCKEQAARISNKGKFSTDTKGKPTSRTQYKPPALKKSNSPGTASSGSSRLPQPSGAGKTVVGVPSGKVSSSSSSLGNKLQTLSPSHKGIAAPHAVANVKPRNSTPPSLARNPAPGVLTNKRKTYTESYIYRPDGDSASSLNGGNIKGIEGNSPGNLSKFCHECGTKYPVEWAKFCCECGIRRMIL</sequence>
<dbReference type="EMBL" id="CR857612">
    <property type="protein sequence ID" value="CAH89887.1"/>
    <property type="molecule type" value="mRNA"/>
</dbReference>
<dbReference type="RefSeq" id="NP_001124880.1">
    <property type="nucleotide sequence ID" value="NM_001131408.1"/>
</dbReference>
<dbReference type="FunCoup" id="Q5REC0">
    <property type="interactions" value="1162"/>
</dbReference>
<dbReference type="GeneID" id="100171745"/>
<dbReference type="KEGG" id="pon:100171745"/>
<dbReference type="CTD" id="51101"/>
<dbReference type="eggNOG" id="KOG3940">
    <property type="taxonomic scope" value="Eukaryota"/>
</dbReference>
<dbReference type="InParanoid" id="Q5REC0"/>
<dbReference type="OrthoDB" id="10066537at2759"/>
<dbReference type="Proteomes" id="UP000001595">
    <property type="component" value="Unplaced"/>
</dbReference>
<dbReference type="GO" id="GO:0008270">
    <property type="term" value="F:zinc ion binding"/>
    <property type="evidence" value="ECO:0007669"/>
    <property type="project" value="UniProtKB-KW"/>
</dbReference>
<dbReference type="Gene3D" id="3.30.160.60">
    <property type="entry name" value="Classic Zinc Finger"/>
    <property type="match status" value="1"/>
</dbReference>
<dbReference type="InterPro" id="IPR026319">
    <property type="entry name" value="ZC2HC1A/B-like"/>
</dbReference>
<dbReference type="InterPro" id="IPR049899">
    <property type="entry name" value="Znf_C2HC_C3H"/>
</dbReference>
<dbReference type="PANTHER" id="PTHR13555">
    <property type="entry name" value="C2H2 ZINC FINGER CGI-62-RELATED"/>
    <property type="match status" value="1"/>
</dbReference>
<dbReference type="PANTHER" id="PTHR13555:SF25">
    <property type="entry name" value="ZINC FINGER C2HC DOMAIN-CONTAINING PROTEIN 1A"/>
    <property type="match status" value="1"/>
</dbReference>
<dbReference type="Pfam" id="PF13913">
    <property type="entry name" value="zf-C2HC_2"/>
    <property type="match status" value="2"/>
</dbReference>
<dbReference type="PROSITE" id="PS52027">
    <property type="entry name" value="ZF_C2HC_C3H"/>
    <property type="match status" value="2"/>
</dbReference>
<evidence type="ECO:0000250" key="1">
    <source>
        <dbReference type="UniProtKB" id="Q96GY0"/>
    </source>
</evidence>
<evidence type="ECO:0000255" key="2">
    <source>
        <dbReference type="PROSITE-ProRule" id="PRU01371"/>
    </source>
</evidence>
<evidence type="ECO:0000256" key="3">
    <source>
        <dbReference type="SAM" id="MobiDB-lite"/>
    </source>
</evidence>
<evidence type="ECO:0000305" key="4"/>
<feature type="chain" id="PRO_0000280248" description="Zinc finger C2HC domain-containing protein 1A">
    <location>
        <begin position="1"/>
        <end position="324"/>
    </location>
</feature>
<feature type="zinc finger region" description="C2HC/C3H-type 1" evidence="2">
    <location>
        <begin position="15"/>
        <end position="44"/>
    </location>
</feature>
<feature type="zinc finger region" description="C2HC/C3H-type 2" evidence="2">
    <location>
        <begin position="118"/>
        <end position="147"/>
    </location>
</feature>
<feature type="region of interest" description="Disordered" evidence="3">
    <location>
        <begin position="43"/>
        <end position="83"/>
    </location>
</feature>
<feature type="region of interest" description="Disordered" evidence="3">
    <location>
        <begin position="150"/>
        <end position="224"/>
    </location>
</feature>
<feature type="region of interest" description="Disordered" evidence="3">
    <location>
        <begin position="236"/>
        <end position="259"/>
    </location>
</feature>
<feature type="compositionally biased region" description="Basic and acidic residues" evidence="3">
    <location>
        <begin position="48"/>
        <end position="58"/>
    </location>
</feature>
<feature type="compositionally biased region" description="Low complexity" evidence="3">
    <location>
        <begin position="176"/>
        <end position="187"/>
    </location>
</feature>
<feature type="compositionally biased region" description="Low complexity" evidence="3">
    <location>
        <begin position="196"/>
        <end position="215"/>
    </location>
</feature>
<feature type="binding site" evidence="2">
    <location>
        <position position="19"/>
    </location>
    <ligand>
        <name>Zn(2+)</name>
        <dbReference type="ChEBI" id="CHEBI:29105"/>
        <label>1</label>
    </ligand>
</feature>
<feature type="binding site" evidence="2">
    <location>
        <position position="22"/>
    </location>
    <ligand>
        <name>Zn(2+)</name>
        <dbReference type="ChEBI" id="CHEBI:29105"/>
        <label>1</label>
    </ligand>
</feature>
<feature type="binding site" evidence="2">
    <location>
        <position position="34"/>
    </location>
    <ligand>
        <name>Zn(2+)</name>
        <dbReference type="ChEBI" id="CHEBI:29105"/>
        <label>1</label>
    </ligand>
</feature>
<feature type="binding site" evidence="2">
    <location>
        <position position="38"/>
    </location>
    <ligand>
        <name>Zn(2+)</name>
        <dbReference type="ChEBI" id="CHEBI:29105"/>
        <label>1</label>
    </ligand>
</feature>
<feature type="binding site" evidence="2">
    <location>
        <position position="122"/>
    </location>
    <ligand>
        <name>Zn(2+)</name>
        <dbReference type="ChEBI" id="CHEBI:29105"/>
        <label>2</label>
    </ligand>
</feature>
<feature type="binding site" evidence="2">
    <location>
        <position position="125"/>
    </location>
    <ligand>
        <name>Zn(2+)</name>
        <dbReference type="ChEBI" id="CHEBI:29105"/>
        <label>2</label>
    </ligand>
</feature>
<feature type="binding site" evidence="2">
    <location>
        <position position="137"/>
    </location>
    <ligand>
        <name>Zn(2+)</name>
        <dbReference type="ChEBI" id="CHEBI:29105"/>
        <label>2</label>
    </ligand>
</feature>
<feature type="binding site" evidence="2">
    <location>
        <position position="141"/>
    </location>
    <ligand>
        <name>Zn(2+)</name>
        <dbReference type="ChEBI" id="CHEBI:29105"/>
        <label>2</label>
    </ligand>
</feature>
<feature type="modified residue" description="Phosphoserine" evidence="1">
    <location>
        <position position="222"/>
    </location>
</feature>
<feature type="modified residue" description="Phosphothreonine" evidence="1">
    <location>
        <position position="243"/>
    </location>
</feature>
<feature type="modified residue" description="Phosphoserine" evidence="1">
    <location>
        <position position="291"/>
    </location>
</feature>
<gene>
    <name type="primary">ZC2HC1A</name>
    <name type="synonym">FAM164A</name>
</gene>
<name>ZC21A_PONAB</name>
<accession>Q5REC0</accession>
<reference key="1">
    <citation type="submission" date="2004-11" db="EMBL/GenBank/DDBJ databases">
        <authorList>
            <consortium name="The German cDNA consortium"/>
        </authorList>
    </citation>
    <scope>NUCLEOTIDE SEQUENCE [LARGE SCALE MRNA]</scope>
    <source>
        <tissue>Brain cortex</tissue>
    </source>
</reference>
<comment type="cofactor">
    <cofactor evidence="2">
        <name>Zn(2+)</name>
        <dbReference type="ChEBI" id="CHEBI:29105"/>
    </cofactor>
</comment>
<comment type="similarity">
    <text evidence="4">Belongs to the ZC2HC1 family.</text>
</comment>
<organism>
    <name type="scientific">Pongo abelii</name>
    <name type="common">Sumatran orangutan</name>
    <name type="synonym">Pongo pygmaeus abelii</name>
    <dbReference type="NCBI Taxonomy" id="9601"/>
    <lineage>
        <taxon>Eukaryota</taxon>
        <taxon>Metazoa</taxon>
        <taxon>Chordata</taxon>
        <taxon>Craniata</taxon>
        <taxon>Vertebrata</taxon>
        <taxon>Euteleostomi</taxon>
        <taxon>Mammalia</taxon>
        <taxon>Eutheria</taxon>
        <taxon>Euarchontoglires</taxon>
        <taxon>Primates</taxon>
        <taxon>Haplorrhini</taxon>
        <taxon>Catarrhini</taxon>
        <taxon>Hominidae</taxon>
        <taxon>Pongo</taxon>
    </lineage>
</organism>
<keyword id="KW-0479">Metal-binding</keyword>
<keyword id="KW-0597">Phosphoprotein</keyword>
<keyword id="KW-1185">Reference proteome</keyword>
<keyword id="KW-0677">Repeat</keyword>
<keyword id="KW-0862">Zinc</keyword>
<keyword id="KW-0863">Zinc-finger</keyword>